<keyword id="KW-0004">4Fe-4S</keyword>
<keyword id="KW-0963">Cytoplasm</keyword>
<keyword id="KW-0408">Iron</keyword>
<keyword id="KW-0411">Iron-sulfur</keyword>
<keyword id="KW-0479">Metal-binding</keyword>
<keyword id="KW-0560">Oxidoreductase</keyword>
<keyword id="KW-1185">Reference proteome</keyword>
<proteinExistence type="inferred from homology"/>
<organism>
    <name type="scientific">Crocosphaera subtropica (strain ATCC 51142 / BH68)</name>
    <name type="common">Cyanothece sp. (strain ATCC 51142)</name>
    <dbReference type="NCBI Taxonomy" id="43989"/>
    <lineage>
        <taxon>Bacteria</taxon>
        <taxon>Bacillati</taxon>
        <taxon>Cyanobacteriota</taxon>
        <taxon>Cyanophyceae</taxon>
        <taxon>Oscillatoriophycideae</taxon>
        <taxon>Chroococcales</taxon>
        <taxon>Aphanothecaceae</taxon>
        <taxon>Crocosphaera</taxon>
        <taxon>Crocosphaera subtropica</taxon>
    </lineage>
</organism>
<feature type="chain" id="PRO_1000092333" description="Hydroxylamine reductase">
    <location>
        <begin position="1"/>
        <end position="549"/>
    </location>
</feature>
<feature type="binding site" evidence="1">
    <location>
        <position position="3"/>
    </location>
    <ligand>
        <name>[4Fe-4S] cluster</name>
        <dbReference type="ChEBI" id="CHEBI:49883"/>
    </ligand>
</feature>
<feature type="binding site" evidence="1">
    <location>
        <position position="6"/>
    </location>
    <ligand>
        <name>[4Fe-4S] cluster</name>
        <dbReference type="ChEBI" id="CHEBI:49883"/>
    </ligand>
</feature>
<feature type="binding site" evidence="1">
    <location>
        <position position="15"/>
    </location>
    <ligand>
        <name>[4Fe-4S] cluster</name>
        <dbReference type="ChEBI" id="CHEBI:49883"/>
    </ligand>
</feature>
<feature type="binding site" evidence="1">
    <location>
        <position position="21"/>
    </location>
    <ligand>
        <name>[4Fe-4S] cluster</name>
        <dbReference type="ChEBI" id="CHEBI:49883"/>
    </ligand>
</feature>
<feature type="binding site" evidence="1">
    <location>
        <position position="244"/>
    </location>
    <ligand>
        <name>hybrid [4Fe-2O-2S] cluster</name>
        <dbReference type="ChEBI" id="CHEBI:60519"/>
    </ligand>
</feature>
<feature type="binding site" evidence="1">
    <location>
        <position position="268"/>
    </location>
    <ligand>
        <name>hybrid [4Fe-2O-2S] cluster</name>
        <dbReference type="ChEBI" id="CHEBI:60519"/>
    </ligand>
</feature>
<feature type="binding site" evidence="1">
    <location>
        <position position="313"/>
    </location>
    <ligand>
        <name>hybrid [4Fe-2O-2S] cluster</name>
        <dbReference type="ChEBI" id="CHEBI:60519"/>
    </ligand>
</feature>
<feature type="binding site" description="via persulfide group" evidence="1">
    <location>
        <position position="405"/>
    </location>
    <ligand>
        <name>hybrid [4Fe-2O-2S] cluster</name>
        <dbReference type="ChEBI" id="CHEBI:60519"/>
    </ligand>
</feature>
<feature type="binding site" evidence="1">
    <location>
        <position position="433"/>
    </location>
    <ligand>
        <name>hybrid [4Fe-2O-2S] cluster</name>
        <dbReference type="ChEBI" id="CHEBI:60519"/>
    </ligand>
</feature>
<feature type="binding site" evidence="1">
    <location>
        <position position="458"/>
    </location>
    <ligand>
        <name>hybrid [4Fe-2O-2S] cluster</name>
        <dbReference type="ChEBI" id="CHEBI:60519"/>
    </ligand>
</feature>
<feature type="binding site" evidence="1">
    <location>
        <position position="492"/>
    </location>
    <ligand>
        <name>hybrid [4Fe-2O-2S] cluster</name>
        <dbReference type="ChEBI" id="CHEBI:60519"/>
    </ligand>
</feature>
<feature type="binding site" evidence="1">
    <location>
        <position position="494"/>
    </location>
    <ligand>
        <name>hybrid [4Fe-2O-2S] cluster</name>
        <dbReference type="ChEBI" id="CHEBI:60519"/>
    </ligand>
</feature>
<feature type="modified residue" description="Cysteine persulfide" evidence="1">
    <location>
        <position position="405"/>
    </location>
</feature>
<comment type="function">
    <text evidence="1">Catalyzes the reduction of hydroxylamine to form NH(3) and H(2)O.</text>
</comment>
<comment type="catalytic activity">
    <reaction evidence="1">
        <text>A + NH4(+) + H2O = hydroxylamine + AH2 + H(+)</text>
        <dbReference type="Rhea" id="RHEA:22052"/>
        <dbReference type="ChEBI" id="CHEBI:13193"/>
        <dbReference type="ChEBI" id="CHEBI:15377"/>
        <dbReference type="ChEBI" id="CHEBI:15378"/>
        <dbReference type="ChEBI" id="CHEBI:15429"/>
        <dbReference type="ChEBI" id="CHEBI:17499"/>
        <dbReference type="ChEBI" id="CHEBI:28938"/>
        <dbReference type="EC" id="1.7.99.1"/>
    </reaction>
</comment>
<comment type="cofactor">
    <cofactor evidence="1">
        <name>[4Fe-4S] cluster</name>
        <dbReference type="ChEBI" id="CHEBI:49883"/>
    </cofactor>
    <text evidence="1">Binds 1 [4Fe-4S] cluster.</text>
</comment>
<comment type="cofactor">
    <cofactor evidence="1">
        <name>hybrid [4Fe-2O-2S] cluster</name>
        <dbReference type="ChEBI" id="CHEBI:60519"/>
    </cofactor>
    <text evidence="1">Binds 1 hybrid [4Fe-2O-2S] cluster.</text>
</comment>
<comment type="subcellular location">
    <subcellularLocation>
        <location evidence="1">Cytoplasm</location>
    </subcellularLocation>
</comment>
<comment type="similarity">
    <text evidence="1">Belongs to the HCP family.</text>
</comment>
<reference key="1">
    <citation type="journal article" date="2008" name="Proc. Natl. Acad. Sci. U.S.A.">
        <title>The genome of Cyanothece 51142, a unicellular diazotrophic cyanobacterium important in the marine nitrogen cycle.</title>
        <authorList>
            <person name="Welsh E.A."/>
            <person name="Liberton M."/>
            <person name="Stoeckel J."/>
            <person name="Loh T."/>
            <person name="Elvitigala T."/>
            <person name="Wang C."/>
            <person name="Wollam A."/>
            <person name="Fulton R.S."/>
            <person name="Clifton S.W."/>
            <person name="Jacobs J.M."/>
            <person name="Aurora R."/>
            <person name="Ghosh B.K."/>
            <person name="Sherman L.A."/>
            <person name="Smith R.D."/>
            <person name="Wilson R.K."/>
            <person name="Pakrasi H.B."/>
        </authorList>
    </citation>
    <scope>NUCLEOTIDE SEQUENCE [LARGE SCALE GENOMIC DNA]</scope>
    <source>
        <strain>ATCC 51142 / BH68</strain>
    </source>
</reference>
<name>HCP_CROS5</name>
<gene>
    <name evidence="1" type="primary">hcp</name>
    <name type="ordered locus">cce_4202</name>
</gene>
<sequence>MFCEQCEQTASGNGCHQWGACGKSPEVNAVQDLLVYCLRGLAPVTIKARELGISCHEADVFTGETLFATMTNVNFERKRFNVYIRQCIHIREGLKNSIEKISKKPISWSEVSNYQPNFSESLAEQGREKDLTFISQSTNNVDIFSLKLTVLYGIKGTASYTFHAQELGQEDEKVYAFIQEALASLDRNDLSLEDWVNIALKVGEINLRAMELLDQGHTTTYGHPTPTKVPLNPKQGKGILVSGHDIKQLAALLQQTVNKGLMVYTHGELLPAHGYPILKEKYPHFYGHYGTAWQNQTKDFAHFPGAIIVTTNCLMPPHETYEDKLFTIGPVGYSGINYLSSDDKGVPDYSLAIETSLKMAGFTTDEAPRHVMVGFAHNTVLNVSEQVIEAVKKGEIRHFFLVGGCDGAKPGRTYYTEFVEKVPKDCIVLTLACGKFRFFDKQLGEIGNLPRLMDVGQCNDAYSAIKIALGLAEAFQVSVNDLPLSMILSWYEQKAVAVLLTLLYLGIKDIRLGPTLPAFITPNVLRFLSETYNLQPITTPDQDLVACLA</sequence>
<evidence type="ECO:0000255" key="1">
    <source>
        <dbReference type="HAMAP-Rule" id="MF_00069"/>
    </source>
</evidence>
<dbReference type="EC" id="1.7.99.1" evidence="1"/>
<dbReference type="EMBL" id="CP000806">
    <property type="protein sequence ID" value="ACB53550.1"/>
    <property type="molecule type" value="Genomic_DNA"/>
</dbReference>
<dbReference type="RefSeq" id="WP_009543724.1">
    <property type="nucleotide sequence ID" value="NC_010546.1"/>
</dbReference>
<dbReference type="SMR" id="B1WRV9"/>
<dbReference type="STRING" id="43989.cce_4202"/>
<dbReference type="KEGG" id="cyt:cce_4202"/>
<dbReference type="eggNOG" id="COG1151">
    <property type="taxonomic scope" value="Bacteria"/>
</dbReference>
<dbReference type="HOGENOM" id="CLU_038344_2_0_3"/>
<dbReference type="OrthoDB" id="9761526at2"/>
<dbReference type="Proteomes" id="UP000001203">
    <property type="component" value="Chromosome circular"/>
</dbReference>
<dbReference type="GO" id="GO:0005737">
    <property type="term" value="C:cytoplasm"/>
    <property type="evidence" value="ECO:0007669"/>
    <property type="project" value="UniProtKB-SubCell"/>
</dbReference>
<dbReference type="GO" id="GO:0051539">
    <property type="term" value="F:4 iron, 4 sulfur cluster binding"/>
    <property type="evidence" value="ECO:0007669"/>
    <property type="project" value="UniProtKB-KW"/>
</dbReference>
<dbReference type="GO" id="GO:0050418">
    <property type="term" value="F:hydroxylamine reductase activity"/>
    <property type="evidence" value="ECO:0007669"/>
    <property type="project" value="UniProtKB-UniRule"/>
</dbReference>
<dbReference type="GO" id="GO:0046872">
    <property type="term" value="F:metal ion binding"/>
    <property type="evidence" value="ECO:0007669"/>
    <property type="project" value="UniProtKB-KW"/>
</dbReference>
<dbReference type="GO" id="GO:0004601">
    <property type="term" value="F:peroxidase activity"/>
    <property type="evidence" value="ECO:0007669"/>
    <property type="project" value="TreeGrafter"/>
</dbReference>
<dbReference type="GO" id="GO:0042542">
    <property type="term" value="P:response to hydrogen peroxide"/>
    <property type="evidence" value="ECO:0007669"/>
    <property type="project" value="TreeGrafter"/>
</dbReference>
<dbReference type="CDD" id="cd01914">
    <property type="entry name" value="HCP"/>
    <property type="match status" value="1"/>
</dbReference>
<dbReference type="FunFam" id="1.20.1270.20:FF:000001">
    <property type="entry name" value="Hydroxylamine reductase"/>
    <property type="match status" value="1"/>
</dbReference>
<dbReference type="FunFam" id="3.40.50.2030:FF:000001">
    <property type="entry name" value="Hydroxylamine reductase"/>
    <property type="match status" value="1"/>
</dbReference>
<dbReference type="Gene3D" id="1.20.1270.20">
    <property type="match status" value="2"/>
</dbReference>
<dbReference type="Gene3D" id="3.40.50.2030">
    <property type="match status" value="2"/>
</dbReference>
<dbReference type="HAMAP" id="MF_00069">
    <property type="entry name" value="Hydroxylam_reduct"/>
    <property type="match status" value="1"/>
</dbReference>
<dbReference type="InterPro" id="IPR004137">
    <property type="entry name" value="HCP/CODH"/>
</dbReference>
<dbReference type="InterPro" id="IPR010048">
    <property type="entry name" value="Hydroxylam_reduct"/>
</dbReference>
<dbReference type="InterPro" id="IPR016099">
    <property type="entry name" value="Prismane-like_a/b-sand"/>
</dbReference>
<dbReference type="InterPro" id="IPR011254">
    <property type="entry name" value="Prismane-like_sf"/>
</dbReference>
<dbReference type="InterPro" id="IPR016100">
    <property type="entry name" value="Prismane_a-bundle"/>
</dbReference>
<dbReference type="NCBIfam" id="TIGR01703">
    <property type="entry name" value="hybrid_clust"/>
    <property type="match status" value="1"/>
</dbReference>
<dbReference type="NCBIfam" id="NF003658">
    <property type="entry name" value="PRK05290.1"/>
    <property type="match status" value="1"/>
</dbReference>
<dbReference type="PANTHER" id="PTHR30109">
    <property type="entry name" value="HYDROXYLAMINE REDUCTASE"/>
    <property type="match status" value="1"/>
</dbReference>
<dbReference type="PANTHER" id="PTHR30109:SF0">
    <property type="entry name" value="HYDROXYLAMINE REDUCTASE"/>
    <property type="match status" value="1"/>
</dbReference>
<dbReference type="Pfam" id="PF03063">
    <property type="entry name" value="Prismane"/>
    <property type="match status" value="1"/>
</dbReference>
<dbReference type="PIRSF" id="PIRSF000076">
    <property type="entry name" value="HCP"/>
    <property type="match status" value="1"/>
</dbReference>
<dbReference type="SUPFAM" id="SSF56821">
    <property type="entry name" value="Prismane protein-like"/>
    <property type="match status" value="1"/>
</dbReference>
<protein>
    <recommendedName>
        <fullName evidence="1">Hydroxylamine reductase</fullName>
        <ecNumber evidence="1">1.7.99.1</ecNumber>
    </recommendedName>
    <alternativeName>
        <fullName evidence="1">Hybrid-cluster protein</fullName>
        <shortName evidence="1">HCP</shortName>
    </alternativeName>
    <alternativeName>
        <fullName evidence="1">Prismane protein</fullName>
    </alternativeName>
</protein>
<accession>B1WRV9</accession>